<name>CLT2_ARATH</name>
<protein>
    <recommendedName>
        <fullName evidence="4">Protein CLT2, chloroplastic</fullName>
    </recommendedName>
    <alternativeName>
        <fullName evidence="4">CRT-like transporter 2</fullName>
    </alternativeName>
    <alternativeName>
        <fullName evidence="4">Chloroquine-resistance transporter-like transporter 2</fullName>
    </alternativeName>
</protein>
<gene>
    <name evidence="4" type="primary">CLT2</name>
    <name evidence="6" type="ordered locus">At4g24460</name>
    <name evidence="8" type="ORF">T22A6.290</name>
</gene>
<organism evidence="7">
    <name type="scientific">Arabidopsis thaliana</name>
    <name type="common">Mouse-ear cress</name>
    <dbReference type="NCBI Taxonomy" id="3702"/>
    <lineage>
        <taxon>Eukaryota</taxon>
        <taxon>Viridiplantae</taxon>
        <taxon>Streptophyta</taxon>
        <taxon>Embryophyta</taxon>
        <taxon>Tracheophyta</taxon>
        <taxon>Spermatophyta</taxon>
        <taxon>Magnoliopsida</taxon>
        <taxon>eudicotyledons</taxon>
        <taxon>Gunneridae</taxon>
        <taxon>Pentapetalae</taxon>
        <taxon>rosids</taxon>
        <taxon>malvids</taxon>
        <taxon>Brassicales</taxon>
        <taxon>Brassicaceae</taxon>
        <taxon>Camelineae</taxon>
        <taxon>Arabidopsis</taxon>
    </lineage>
</organism>
<dbReference type="EMBL" id="AL078637">
    <property type="protein sequence ID" value="CAB45081.1"/>
    <property type="status" value="ALT_SEQ"/>
    <property type="molecule type" value="Genomic_DNA"/>
</dbReference>
<dbReference type="EMBL" id="AL161561">
    <property type="protein sequence ID" value="CAB79356.1"/>
    <property type="status" value="ALT_SEQ"/>
    <property type="molecule type" value="Genomic_DNA"/>
</dbReference>
<dbReference type="EMBL" id="CP002687">
    <property type="protein sequence ID" value="AEE84907.1"/>
    <property type="molecule type" value="Genomic_DNA"/>
</dbReference>
<dbReference type="EMBL" id="CP002687">
    <property type="protein sequence ID" value="AEE84908.1"/>
    <property type="molecule type" value="Genomic_DNA"/>
</dbReference>
<dbReference type="EMBL" id="BT005771">
    <property type="protein sequence ID" value="AAO64175.1"/>
    <property type="molecule type" value="mRNA"/>
</dbReference>
<dbReference type="EMBL" id="AK228633">
    <property type="protein sequence ID" value="BAF00542.1"/>
    <property type="molecule type" value="mRNA"/>
</dbReference>
<dbReference type="EMBL" id="BT029757">
    <property type="protein sequence ID" value="ABM06027.1"/>
    <property type="molecule type" value="mRNA"/>
</dbReference>
<dbReference type="PIR" id="T09909">
    <property type="entry name" value="T09909"/>
</dbReference>
<dbReference type="RefSeq" id="NP_001190820.1">
    <molecule id="A1L4X0-1"/>
    <property type="nucleotide sequence ID" value="NM_001203891.1"/>
</dbReference>
<dbReference type="RefSeq" id="NP_194177.2">
    <molecule id="A1L4X0-1"/>
    <property type="nucleotide sequence ID" value="NM_118579.4"/>
</dbReference>
<dbReference type="SMR" id="A1L4X0"/>
<dbReference type="FunCoup" id="A1L4X0">
    <property type="interactions" value="530"/>
</dbReference>
<dbReference type="IntAct" id="A1L4X0">
    <property type="interactions" value="10"/>
</dbReference>
<dbReference type="STRING" id="3702.A1L4X0"/>
<dbReference type="PaxDb" id="3702-AT4G24460.1"/>
<dbReference type="ProteomicsDB" id="240985">
    <molecule id="A1L4X0-1"/>
</dbReference>
<dbReference type="EnsemblPlants" id="AT4G24460.1">
    <molecule id="A1L4X0-1"/>
    <property type="protein sequence ID" value="AT4G24460.1"/>
    <property type="gene ID" value="AT4G24460"/>
</dbReference>
<dbReference type="EnsemblPlants" id="AT4G24460.2">
    <molecule id="A1L4X0-1"/>
    <property type="protein sequence ID" value="AT4G24460.2"/>
    <property type="gene ID" value="AT4G24460"/>
</dbReference>
<dbReference type="GeneID" id="828548"/>
<dbReference type="Gramene" id="AT4G24460.1">
    <molecule id="A1L4X0-1"/>
    <property type="protein sequence ID" value="AT4G24460.1"/>
    <property type="gene ID" value="AT4G24460"/>
</dbReference>
<dbReference type="Gramene" id="AT4G24460.2">
    <molecule id="A1L4X0-1"/>
    <property type="protein sequence ID" value="AT4G24460.2"/>
    <property type="gene ID" value="AT4G24460"/>
</dbReference>
<dbReference type="KEGG" id="ath:AT4G24460"/>
<dbReference type="Araport" id="AT4G24460"/>
<dbReference type="TAIR" id="AT4G24460">
    <property type="gene designation" value="CLT2"/>
</dbReference>
<dbReference type="eggNOG" id="ENOG502QR5M">
    <property type="taxonomic scope" value="Eukaryota"/>
</dbReference>
<dbReference type="HOGENOM" id="CLU_038989_1_0_1"/>
<dbReference type="InParanoid" id="A1L4X0"/>
<dbReference type="OMA" id="FAYIIPM"/>
<dbReference type="PhylomeDB" id="A1L4X0"/>
<dbReference type="PRO" id="PR:A1L4X0"/>
<dbReference type="Proteomes" id="UP000006548">
    <property type="component" value="Chromosome 4"/>
</dbReference>
<dbReference type="ExpressionAtlas" id="A1L4X0">
    <property type="expression patterns" value="baseline and differential"/>
</dbReference>
<dbReference type="GO" id="GO:0009507">
    <property type="term" value="C:chloroplast"/>
    <property type="evidence" value="ECO:0007005"/>
    <property type="project" value="TAIR"/>
</dbReference>
<dbReference type="GO" id="GO:0031969">
    <property type="term" value="C:chloroplast membrane"/>
    <property type="evidence" value="ECO:0007669"/>
    <property type="project" value="UniProtKB-SubCell"/>
</dbReference>
<dbReference type="GO" id="GO:0009536">
    <property type="term" value="C:plastid"/>
    <property type="evidence" value="ECO:0000314"/>
    <property type="project" value="TAIR"/>
</dbReference>
<dbReference type="GO" id="GO:0002229">
    <property type="term" value="P:defense response to oomycetes"/>
    <property type="evidence" value="ECO:0000316"/>
    <property type="project" value="TAIR"/>
</dbReference>
<dbReference type="GO" id="GO:0034635">
    <property type="term" value="P:glutathione transport"/>
    <property type="evidence" value="ECO:0000314"/>
    <property type="project" value="TAIR"/>
</dbReference>
<dbReference type="GO" id="GO:0046686">
    <property type="term" value="P:response to cadmium ion"/>
    <property type="evidence" value="ECO:0000315"/>
    <property type="project" value="TAIR"/>
</dbReference>
<dbReference type="InterPro" id="IPR013936">
    <property type="entry name" value="CRT-like"/>
</dbReference>
<dbReference type="PANTHER" id="PTHR31326">
    <property type="entry name" value="PROTEIN CLT2, CHLOROPLASTIC"/>
    <property type="match status" value="1"/>
</dbReference>
<dbReference type="PANTHER" id="PTHR31326:SF1">
    <property type="entry name" value="PROTEIN CLT2, CHLOROPLASTIC"/>
    <property type="match status" value="1"/>
</dbReference>
<dbReference type="Pfam" id="PF08627">
    <property type="entry name" value="CRT-like"/>
    <property type="match status" value="1"/>
</dbReference>
<dbReference type="SUPFAM" id="SSF103481">
    <property type="entry name" value="Multidrug resistance efflux transporter EmrE"/>
    <property type="match status" value="1"/>
</dbReference>
<feature type="transit peptide" description="Chloroplast" evidence="1">
    <location>
        <begin position="1"/>
        <end position="79"/>
    </location>
</feature>
<feature type="chain" id="PRO_0000433247" description="Protein CLT2, chloroplastic" evidence="1">
    <location>
        <begin position="80"/>
        <end position="431"/>
    </location>
</feature>
<feature type="transmembrane region" description="Helical" evidence="1">
    <location>
        <begin position="99"/>
        <end position="119"/>
    </location>
</feature>
<feature type="transmembrane region" description="Helical" evidence="1">
    <location>
        <begin position="122"/>
        <end position="142"/>
    </location>
</feature>
<feature type="transmembrane region" description="Helical" evidence="1">
    <location>
        <begin position="163"/>
        <end position="183"/>
    </location>
</feature>
<feature type="transmembrane region" description="Helical" evidence="1">
    <location>
        <begin position="188"/>
        <end position="208"/>
    </location>
</feature>
<feature type="transmembrane region" description="Helical" evidence="1">
    <location>
        <begin position="212"/>
        <end position="232"/>
    </location>
</feature>
<feature type="transmembrane region" description="Helical" evidence="1">
    <location>
        <begin position="244"/>
        <end position="264"/>
    </location>
</feature>
<feature type="transmembrane region" description="Helical" evidence="1">
    <location>
        <begin position="284"/>
        <end position="304"/>
    </location>
</feature>
<feature type="transmembrane region" description="Helical" evidence="1">
    <location>
        <begin position="343"/>
        <end position="363"/>
    </location>
</feature>
<feature type="transmembrane region" description="Helical" evidence="1">
    <location>
        <begin position="365"/>
        <end position="385"/>
    </location>
</feature>
<feature type="transmembrane region" description="Helical" evidence="1">
    <location>
        <begin position="403"/>
        <end position="423"/>
    </location>
</feature>
<feature type="splice variant" id="VSP_057694" description="In isoform 2.">
    <original>SGSGADTTLSGIGFLWPAVLVASAAFQAGASIIK</original>
    <variation>RYYAIWNRFLMACCIGSIRCFSSWCIYHKGICFQ</variation>
    <location>
        <begin position="233"/>
        <end position="266"/>
    </location>
</feature>
<feature type="splice variant" id="VSP_057695" description="In isoform 2.">
    <location>
        <begin position="267"/>
        <end position="431"/>
    </location>
</feature>
<evidence type="ECO:0000255" key="1"/>
<evidence type="ECO:0000269" key="2">
    <source>
    </source>
</evidence>
<evidence type="ECO:0000269" key="3">
    <source>
    </source>
</evidence>
<evidence type="ECO:0000303" key="4">
    <source>
    </source>
</evidence>
<evidence type="ECO:0000305" key="5"/>
<evidence type="ECO:0000312" key="6">
    <source>
        <dbReference type="Araport" id="AT4G24460"/>
    </source>
</evidence>
<evidence type="ECO:0000312" key="7">
    <source>
        <dbReference type="EMBL" id="ABM06027.1"/>
    </source>
</evidence>
<evidence type="ECO:0000312" key="8">
    <source>
        <dbReference type="EMBL" id="CAB45081.1"/>
    </source>
</evidence>
<sequence>MDTVLMATTPPIRCLHASIPTVFRSPAIYQVSCRSSQLFSYRSTTMMSMCFLRRSDLRSRFLSTPKTTSPMRRPRFSVGASTEESSIPSNRNLIVANSVVIVALAVANRVLYKLALVPMKQYPFFMAQLTTFGYVLIYFTILYTRRRLGIVTNEMMDVPKWRFAIIGFLEALGVATGMAAAAMLPGPVIPILNQTYLVWQLLFALLILGRRFLLNQIAGCLLVAVGVVVAVSSGSGADTTLSGIGFLWPAVLVASAAFQAGASIIKEFVFNDAAKRLEGKSLDIFVVNSFGSGFQALFVFLLLPFLSNLKGIPFASLPSYLKDGAGCFFNTGAKISGCDGAPILPLLYISTNLAFNISLLHLVKISSAIVSSLTMMLSVPLAVYIMSKPLPYLPGGSSLSSNFTMGCIVLVLGLLLYNIPTTPTKQHTKTS</sequence>
<reference key="1">
    <citation type="journal article" date="1999" name="Nature">
        <title>Sequence and analysis of chromosome 4 of the plant Arabidopsis thaliana.</title>
        <authorList>
            <person name="Mayer K.F.X."/>
            <person name="Schueller C."/>
            <person name="Wambutt R."/>
            <person name="Murphy G."/>
            <person name="Volckaert G."/>
            <person name="Pohl T."/>
            <person name="Duesterhoeft A."/>
            <person name="Stiekema W."/>
            <person name="Entian K.-D."/>
            <person name="Terryn N."/>
            <person name="Harris B."/>
            <person name="Ansorge W."/>
            <person name="Brandt P."/>
            <person name="Grivell L.A."/>
            <person name="Rieger M."/>
            <person name="Weichselgartner M."/>
            <person name="de Simone V."/>
            <person name="Obermaier B."/>
            <person name="Mache R."/>
            <person name="Mueller M."/>
            <person name="Kreis M."/>
            <person name="Delseny M."/>
            <person name="Puigdomenech P."/>
            <person name="Watson M."/>
            <person name="Schmidtheini T."/>
            <person name="Reichert B."/>
            <person name="Portetelle D."/>
            <person name="Perez-Alonso M."/>
            <person name="Boutry M."/>
            <person name="Bancroft I."/>
            <person name="Vos P."/>
            <person name="Hoheisel J."/>
            <person name="Zimmermann W."/>
            <person name="Wedler H."/>
            <person name="Ridley P."/>
            <person name="Langham S.-A."/>
            <person name="McCullagh B."/>
            <person name="Bilham L."/>
            <person name="Robben J."/>
            <person name="van der Schueren J."/>
            <person name="Grymonprez B."/>
            <person name="Chuang Y.-J."/>
            <person name="Vandenbussche F."/>
            <person name="Braeken M."/>
            <person name="Weltjens I."/>
            <person name="Voet M."/>
            <person name="Bastiaens I."/>
            <person name="Aert R."/>
            <person name="Defoor E."/>
            <person name="Weitzenegger T."/>
            <person name="Bothe G."/>
            <person name="Ramsperger U."/>
            <person name="Hilbert H."/>
            <person name="Braun M."/>
            <person name="Holzer E."/>
            <person name="Brandt A."/>
            <person name="Peters S."/>
            <person name="van Staveren M."/>
            <person name="Dirkse W."/>
            <person name="Mooijman P."/>
            <person name="Klein Lankhorst R."/>
            <person name="Rose M."/>
            <person name="Hauf J."/>
            <person name="Koetter P."/>
            <person name="Berneiser S."/>
            <person name="Hempel S."/>
            <person name="Feldpausch M."/>
            <person name="Lamberth S."/>
            <person name="Van den Daele H."/>
            <person name="De Keyser A."/>
            <person name="Buysshaert C."/>
            <person name="Gielen J."/>
            <person name="Villarroel R."/>
            <person name="De Clercq R."/>
            <person name="van Montagu M."/>
            <person name="Rogers J."/>
            <person name="Cronin A."/>
            <person name="Quail M.A."/>
            <person name="Bray-Allen S."/>
            <person name="Clark L."/>
            <person name="Doggett J."/>
            <person name="Hall S."/>
            <person name="Kay M."/>
            <person name="Lennard N."/>
            <person name="McLay K."/>
            <person name="Mayes R."/>
            <person name="Pettett A."/>
            <person name="Rajandream M.A."/>
            <person name="Lyne M."/>
            <person name="Benes V."/>
            <person name="Rechmann S."/>
            <person name="Borkova D."/>
            <person name="Bloecker H."/>
            <person name="Scharfe M."/>
            <person name="Grimm M."/>
            <person name="Loehnert T.-H."/>
            <person name="Dose S."/>
            <person name="de Haan M."/>
            <person name="Maarse A.C."/>
            <person name="Schaefer M."/>
            <person name="Mueller-Auer S."/>
            <person name="Gabel C."/>
            <person name="Fuchs M."/>
            <person name="Fartmann B."/>
            <person name="Granderath K."/>
            <person name="Dauner D."/>
            <person name="Herzl A."/>
            <person name="Neumann S."/>
            <person name="Argiriou A."/>
            <person name="Vitale D."/>
            <person name="Liguori R."/>
            <person name="Piravandi E."/>
            <person name="Massenet O."/>
            <person name="Quigley F."/>
            <person name="Clabauld G."/>
            <person name="Muendlein A."/>
            <person name="Felber R."/>
            <person name="Schnabl S."/>
            <person name="Hiller R."/>
            <person name="Schmidt W."/>
            <person name="Lecharny A."/>
            <person name="Aubourg S."/>
            <person name="Chefdor F."/>
            <person name="Cooke R."/>
            <person name="Berger C."/>
            <person name="Monfort A."/>
            <person name="Casacuberta E."/>
            <person name="Gibbons T."/>
            <person name="Weber N."/>
            <person name="Vandenbol M."/>
            <person name="Bargues M."/>
            <person name="Terol J."/>
            <person name="Torres A."/>
            <person name="Perez-Perez A."/>
            <person name="Purnelle B."/>
            <person name="Bent E."/>
            <person name="Johnson S."/>
            <person name="Tacon D."/>
            <person name="Jesse T."/>
            <person name="Heijnen L."/>
            <person name="Schwarz S."/>
            <person name="Scholler P."/>
            <person name="Heber S."/>
            <person name="Francs P."/>
            <person name="Bielke C."/>
            <person name="Frishman D."/>
            <person name="Haase D."/>
            <person name="Lemcke K."/>
            <person name="Mewes H.-W."/>
            <person name="Stocker S."/>
            <person name="Zaccaria P."/>
            <person name="Bevan M."/>
            <person name="Wilson R.K."/>
            <person name="de la Bastide M."/>
            <person name="Habermann K."/>
            <person name="Parnell L."/>
            <person name="Dedhia N."/>
            <person name="Gnoj L."/>
            <person name="Schutz K."/>
            <person name="Huang E."/>
            <person name="Spiegel L."/>
            <person name="Sekhon M."/>
            <person name="Murray J."/>
            <person name="Sheet P."/>
            <person name="Cordes M."/>
            <person name="Abu-Threideh J."/>
            <person name="Stoneking T."/>
            <person name="Kalicki J."/>
            <person name="Graves T."/>
            <person name="Harmon G."/>
            <person name="Edwards J."/>
            <person name="Latreille P."/>
            <person name="Courtney L."/>
            <person name="Cloud J."/>
            <person name="Abbott A."/>
            <person name="Scott K."/>
            <person name="Johnson D."/>
            <person name="Minx P."/>
            <person name="Bentley D."/>
            <person name="Fulton B."/>
            <person name="Miller N."/>
            <person name="Greco T."/>
            <person name="Kemp K."/>
            <person name="Kramer J."/>
            <person name="Fulton L."/>
            <person name="Mardis E."/>
            <person name="Dante M."/>
            <person name="Pepin K."/>
            <person name="Hillier L.W."/>
            <person name="Nelson J."/>
            <person name="Spieth J."/>
            <person name="Ryan E."/>
            <person name="Andrews S."/>
            <person name="Geisel C."/>
            <person name="Layman D."/>
            <person name="Du H."/>
            <person name="Ali J."/>
            <person name="Berghoff A."/>
            <person name="Jones K."/>
            <person name="Drone K."/>
            <person name="Cotton M."/>
            <person name="Joshu C."/>
            <person name="Antonoiu B."/>
            <person name="Zidanic M."/>
            <person name="Strong C."/>
            <person name="Sun H."/>
            <person name="Lamar B."/>
            <person name="Yordan C."/>
            <person name="Ma P."/>
            <person name="Zhong J."/>
            <person name="Preston R."/>
            <person name="Vil D."/>
            <person name="Shekher M."/>
            <person name="Matero A."/>
            <person name="Shah R."/>
            <person name="Swaby I.K."/>
            <person name="O'Shaughnessy A."/>
            <person name="Rodriguez M."/>
            <person name="Hoffman J."/>
            <person name="Till S."/>
            <person name="Granat S."/>
            <person name="Shohdy N."/>
            <person name="Hasegawa A."/>
            <person name="Hameed A."/>
            <person name="Lodhi M."/>
            <person name="Johnson A."/>
            <person name="Chen E."/>
            <person name="Marra M.A."/>
            <person name="Martienssen R."/>
            <person name="McCombie W.R."/>
        </authorList>
    </citation>
    <scope>NUCLEOTIDE SEQUENCE [LARGE SCALE GENOMIC DNA]</scope>
    <source>
        <strain>cv. Columbia</strain>
    </source>
</reference>
<reference key="2">
    <citation type="journal article" date="2017" name="Plant J.">
        <title>Araport11: a complete reannotation of the Arabidopsis thaliana reference genome.</title>
        <authorList>
            <person name="Cheng C.Y."/>
            <person name="Krishnakumar V."/>
            <person name="Chan A.P."/>
            <person name="Thibaud-Nissen F."/>
            <person name="Schobel S."/>
            <person name="Town C.D."/>
        </authorList>
    </citation>
    <scope>GENOME REANNOTATION</scope>
    <source>
        <strain>cv. Columbia</strain>
    </source>
</reference>
<reference key="3">
    <citation type="journal article" date="2003" name="Science">
        <title>Empirical analysis of transcriptional activity in the Arabidopsis genome.</title>
        <authorList>
            <person name="Yamada K."/>
            <person name="Lim J."/>
            <person name="Dale J.M."/>
            <person name="Chen H."/>
            <person name="Shinn P."/>
            <person name="Palm C.J."/>
            <person name="Southwick A.M."/>
            <person name="Wu H.C."/>
            <person name="Kim C.J."/>
            <person name="Nguyen M."/>
            <person name="Pham P.K."/>
            <person name="Cheuk R.F."/>
            <person name="Karlin-Newmann G."/>
            <person name="Liu S.X."/>
            <person name="Lam B."/>
            <person name="Sakano H."/>
            <person name="Wu T."/>
            <person name="Yu G."/>
            <person name="Miranda M."/>
            <person name="Quach H.L."/>
            <person name="Tripp M."/>
            <person name="Chang C.H."/>
            <person name="Lee J.M."/>
            <person name="Toriumi M.J."/>
            <person name="Chan M.M."/>
            <person name="Tang C.C."/>
            <person name="Onodera C.S."/>
            <person name="Deng J.M."/>
            <person name="Akiyama K."/>
            <person name="Ansari Y."/>
            <person name="Arakawa T."/>
            <person name="Banh J."/>
            <person name="Banno F."/>
            <person name="Bowser L."/>
            <person name="Brooks S.Y."/>
            <person name="Carninci P."/>
            <person name="Chao Q."/>
            <person name="Choy N."/>
            <person name="Enju A."/>
            <person name="Goldsmith A.D."/>
            <person name="Gurjal M."/>
            <person name="Hansen N.F."/>
            <person name="Hayashizaki Y."/>
            <person name="Johnson-Hopson C."/>
            <person name="Hsuan V.W."/>
            <person name="Iida K."/>
            <person name="Karnes M."/>
            <person name="Khan S."/>
            <person name="Koesema E."/>
            <person name="Ishida J."/>
            <person name="Jiang P.X."/>
            <person name="Jones T."/>
            <person name="Kawai J."/>
            <person name="Kamiya A."/>
            <person name="Meyers C."/>
            <person name="Nakajima M."/>
            <person name="Narusaka M."/>
            <person name="Seki M."/>
            <person name="Sakurai T."/>
            <person name="Satou M."/>
            <person name="Tamse R."/>
            <person name="Vaysberg M."/>
            <person name="Wallender E.K."/>
            <person name="Wong C."/>
            <person name="Yamamura Y."/>
            <person name="Yuan S."/>
            <person name="Shinozaki K."/>
            <person name="Davis R.W."/>
            <person name="Theologis A."/>
            <person name="Ecker J.R."/>
        </authorList>
    </citation>
    <scope>NUCLEOTIDE SEQUENCE [LARGE SCALE MRNA] (ISOFORM 2)</scope>
    <source>
        <strain>cv. Columbia</strain>
    </source>
</reference>
<reference key="4">
    <citation type="submission" date="2006-07" db="EMBL/GenBank/DDBJ databases">
        <title>Large-scale analysis of RIKEN Arabidopsis full-length (RAFL) cDNAs.</title>
        <authorList>
            <person name="Totoki Y."/>
            <person name="Seki M."/>
            <person name="Ishida J."/>
            <person name="Nakajima M."/>
            <person name="Enju A."/>
            <person name="Kamiya A."/>
            <person name="Narusaka M."/>
            <person name="Shin-i T."/>
            <person name="Nakagawa M."/>
            <person name="Sakamoto N."/>
            <person name="Oishi K."/>
            <person name="Kohara Y."/>
            <person name="Kobayashi M."/>
            <person name="Toyoda A."/>
            <person name="Sakaki Y."/>
            <person name="Sakurai T."/>
            <person name="Iida K."/>
            <person name="Akiyama K."/>
            <person name="Satou M."/>
            <person name="Toyoda T."/>
            <person name="Konagaya A."/>
            <person name="Carninci P."/>
            <person name="Kawai J."/>
            <person name="Hayashizaki Y."/>
            <person name="Shinozaki K."/>
        </authorList>
    </citation>
    <scope>NUCLEOTIDE SEQUENCE [LARGE SCALE MRNA] (ISOFORM 2)</scope>
    <source>
        <strain>cv. Columbia</strain>
    </source>
</reference>
<reference key="5">
    <citation type="submission" date="2006-12" db="EMBL/GenBank/DDBJ databases">
        <title>Arabidopsis ORF clones.</title>
        <authorList>
            <person name="Bautista V.R."/>
            <person name="Kim C.J."/>
            <person name="Chen H."/>
            <person name="Wu S.Y."/>
            <person name="De Los Reyes C."/>
            <person name="Ecker J.R."/>
        </authorList>
    </citation>
    <scope>NUCLEOTIDE SEQUENCE [LARGE SCALE MRNA] (ISOFORM 1)</scope>
</reference>
<reference key="6">
    <citation type="journal article" date="2010" name="Proc. Natl. Acad. Sci. U.S.A.">
        <title>Plant homologs of the Plasmodium falciparum chloroquine-resistance transporter, PfCRT, are required for glutathione homeostasis and stress responses.</title>
        <authorList>
            <person name="Maughan S.C."/>
            <person name="Pasternak M."/>
            <person name="Cairns N."/>
            <person name="Kiddle G."/>
            <person name="Brach T."/>
            <person name="Jarvis R."/>
            <person name="Haas F."/>
            <person name="Nieuwland J."/>
            <person name="Lim B."/>
            <person name="Muller C."/>
            <person name="Salcedo-Sora E."/>
            <person name="Kruse C."/>
            <person name="Orsel M."/>
            <person name="Hell R."/>
            <person name="Miller A.J."/>
            <person name="Bray P."/>
            <person name="Foyer C.H."/>
            <person name="Murray J.A."/>
            <person name="Meyer A.J."/>
            <person name="Cobbett C.S."/>
        </authorList>
    </citation>
    <scope>FUNCTION</scope>
    <scope>DISRUPTION PHENOTYPE</scope>
    <scope>SUBCELLULAR LOCATION</scope>
</reference>
<reference key="7">
    <citation type="journal article" date="2013" name="Front. Plant Sci.">
        <title>A phenomics approach to the analysis of the influence of glutathione on leaf area and abiotic stress tolerance in Arabidopsis thaliana.</title>
        <authorList>
            <person name="Schnaubelt D."/>
            <person name="Schulz P."/>
            <person name="Hannah M.A."/>
            <person name="Yocgo R.E."/>
            <person name="Foyer C.H."/>
        </authorList>
    </citation>
    <scope>DISRUPTION PHENOTYPE</scope>
</reference>
<keyword id="KW-0025">Alternative splicing</keyword>
<keyword id="KW-0150">Chloroplast</keyword>
<keyword id="KW-0472">Membrane</keyword>
<keyword id="KW-0934">Plastid</keyword>
<keyword id="KW-1185">Reference proteome</keyword>
<keyword id="KW-0809">Transit peptide</keyword>
<keyword id="KW-0812">Transmembrane</keyword>
<keyword id="KW-1133">Transmembrane helix</keyword>
<keyword id="KW-0813">Transport</keyword>
<comment type="function">
    <text evidence="2">Involved in thiol transport from the plastid to the cytosol. Transports probably both glutathione (GSH) and its precursor, gamma-glutamylcysteine (gamma-EC).</text>
</comment>
<comment type="subcellular location">
    <subcellularLocation>
        <location evidence="2">Plastid</location>
        <location evidence="2">Chloroplast membrane</location>
        <topology evidence="1">Multi-pass membrane protein</topology>
    </subcellularLocation>
</comment>
<comment type="alternative products">
    <event type="alternative splicing"/>
    <isoform>
        <id>A1L4X0-1</id>
        <name>1</name>
        <sequence type="displayed"/>
    </isoform>
    <isoform>
        <id>A1L4X0-2</id>
        <name>2</name>
        <sequence type="described" ref="VSP_057694 VSP_057695"/>
    </isoform>
</comment>
<comment type="disruption phenotype">
    <text evidence="2 3">No visible phenotype. Clt1, clt3 and clt3 triple mutants are more sensitive to Cd(2+), have a decreased level of cytosolic GSH, an altered systemic acquired resistance response and are more sensitive to Phytophthora infection (PubMed:20080670). Clt1, clt3 and clt3 triple mutants have decreased lateral root densities (PubMed:24204368).</text>
</comment>
<comment type="similarity">
    <text evidence="5">Belongs to the CRT-like transporter family.</text>
</comment>
<comment type="sequence caution" evidence="5">
    <conflict type="erroneous gene model prediction">
        <sequence resource="EMBL-CDS" id="CAB45081"/>
    </conflict>
</comment>
<comment type="sequence caution" evidence="5">
    <conflict type="erroneous gene model prediction">
        <sequence resource="EMBL-CDS" id="CAB79356"/>
    </conflict>
</comment>
<accession>A1L4X0</accession>
<accession>Q84TI1</accession>
<accession>Q9STU9</accession>
<proteinExistence type="evidence at transcript level"/>